<sequence length="288" mass="30189">MAWRDRRGALRAILTGSACVRPASVYDAISIRIADDLGFPFGMFGGSVASLAILGDPDIALITLTELAEQVRRMSRAAALPVVVDADHGYGNALNVRRTVEELEAAGAAGLTIEDTLLPQAYGEAKPQLVSREEGLGKIKAALDARRDPNLVIIGRTGACSITSLDDAIERALAYQAAGVDALFFTGVKTRAQLEAISAATTLPIALGSPPAELGDFDHLAERRVRIAVQGHAPIAAATEAVFKTLSAIKDGAAPKALTGLASAELMDKVTRADVVAERGEHFLGVKR</sequence>
<gene>
    <name type="ordered locus">RPA3174</name>
</gene>
<proteinExistence type="inferred from homology"/>
<organism>
    <name type="scientific">Rhodopseudomonas palustris (strain ATCC BAA-98 / CGA009)</name>
    <dbReference type="NCBI Taxonomy" id="258594"/>
    <lineage>
        <taxon>Bacteria</taxon>
        <taxon>Pseudomonadati</taxon>
        <taxon>Pseudomonadota</taxon>
        <taxon>Alphaproteobacteria</taxon>
        <taxon>Hyphomicrobiales</taxon>
        <taxon>Nitrobacteraceae</taxon>
        <taxon>Rhodopseudomonas</taxon>
    </lineage>
</organism>
<evidence type="ECO:0000255" key="1">
    <source>
        <dbReference type="HAMAP-Rule" id="MF_01299"/>
    </source>
</evidence>
<evidence type="ECO:0000305" key="2"/>
<name>OADC_RHOPA</name>
<feature type="chain" id="PRO_0000364075" description="Oxaloacetate decarboxylase">
    <location>
        <begin position="1"/>
        <end position="288"/>
    </location>
</feature>
<feature type="binding site" evidence="1">
    <location>
        <position position="47"/>
    </location>
    <ligand>
        <name>substrate</name>
    </ligand>
</feature>
<feature type="binding site" evidence="1">
    <location>
        <position position="85"/>
    </location>
    <ligand>
        <name>Mg(2+)</name>
        <dbReference type="ChEBI" id="CHEBI:18420"/>
    </ligand>
</feature>
<feature type="binding site" evidence="1">
    <location>
        <position position="156"/>
    </location>
    <ligand>
        <name>substrate</name>
    </ligand>
</feature>
<feature type="binding site" evidence="1">
    <location>
        <position position="232"/>
    </location>
    <ligand>
        <name>substrate</name>
    </ligand>
</feature>
<comment type="function">
    <text evidence="1">Catalyzes the decarboxylation of oxaloacetate into pyruvate. Seems to play a role in maintaining cellular concentrations of bicarbonate and pyruvate.</text>
</comment>
<comment type="catalytic activity">
    <reaction evidence="1">
        <text>oxaloacetate + H(+) = pyruvate + CO2</text>
        <dbReference type="Rhea" id="RHEA:15641"/>
        <dbReference type="ChEBI" id="CHEBI:15361"/>
        <dbReference type="ChEBI" id="CHEBI:15378"/>
        <dbReference type="ChEBI" id="CHEBI:16452"/>
        <dbReference type="ChEBI" id="CHEBI:16526"/>
        <dbReference type="EC" id="4.1.1.112"/>
    </reaction>
</comment>
<comment type="cofactor">
    <cofactor evidence="1">
        <name>Mg(2+)</name>
        <dbReference type="ChEBI" id="CHEBI:18420"/>
    </cofactor>
    <text evidence="1">Binds 1 Mg(2+) ion per subunit.</text>
</comment>
<comment type="subunit">
    <text evidence="1">Homotetramer; dimer of dimers.</text>
</comment>
<comment type="similarity">
    <text evidence="2">Belongs to the isocitrate lyase/PEP mutase superfamily. Oxaloacetate decarboxylase family.</text>
</comment>
<protein>
    <recommendedName>
        <fullName evidence="1">Oxaloacetate decarboxylase</fullName>
        <ecNumber evidence="1">4.1.1.112</ecNumber>
    </recommendedName>
</protein>
<dbReference type="EC" id="4.1.1.112" evidence="1"/>
<dbReference type="EMBL" id="BX572603">
    <property type="protein sequence ID" value="CAE28615.1"/>
    <property type="molecule type" value="Genomic_DNA"/>
</dbReference>
<dbReference type="RefSeq" id="WP_011158719.1">
    <property type="nucleotide sequence ID" value="NZ_CP116810.1"/>
</dbReference>
<dbReference type="SMR" id="Q6N509"/>
<dbReference type="STRING" id="258594.RPA3174"/>
<dbReference type="GeneID" id="66894258"/>
<dbReference type="eggNOG" id="COG2513">
    <property type="taxonomic scope" value="Bacteria"/>
</dbReference>
<dbReference type="HOGENOM" id="CLU_027389_3_2_5"/>
<dbReference type="PhylomeDB" id="Q6N509"/>
<dbReference type="GO" id="GO:0000287">
    <property type="term" value="F:magnesium ion binding"/>
    <property type="evidence" value="ECO:0007669"/>
    <property type="project" value="UniProtKB-UniRule"/>
</dbReference>
<dbReference type="GO" id="GO:0046421">
    <property type="term" value="F:methylisocitrate lyase activity"/>
    <property type="evidence" value="ECO:0007669"/>
    <property type="project" value="TreeGrafter"/>
</dbReference>
<dbReference type="GO" id="GO:0008948">
    <property type="term" value="F:oxaloacetate decarboxylase activity"/>
    <property type="evidence" value="ECO:0007669"/>
    <property type="project" value="UniProtKB-UniRule"/>
</dbReference>
<dbReference type="GO" id="GO:0006107">
    <property type="term" value="P:oxaloacetate metabolic process"/>
    <property type="evidence" value="ECO:0007669"/>
    <property type="project" value="UniProtKB-UniRule"/>
</dbReference>
<dbReference type="GO" id="GO:0019629">
    <property type="term" value="P:propionate catabolic process, 2-methylcitrate cycle"/>
    <property type="evidence" value="ECO:0007669"/>
    <property type="project" value="TreeGrafter"/>
</dbReference>
<dbReference type="GO" id="GO:0042866">
    <property type="term" value="P:pyruvate biosynthetic process"/>
    <property type="evidence" value="ECO:0007669"/>
    <property type="project" value="UniProtKB-UniRule"/>
</dbReference>
<dbReference type="CDD" id="cd00377">
    <property type="entry name" value="ICL_PEPM"/>
    <property type="match status" value="1"/>
</dbReference>
<dbReference type="Gene3D" id="3.20.20.60">
    <property type="entry name" value="Phosphoenolpyruvate-binding domains"/>
    <property type="match status" value="1"/>
</dbReference>
<dbReference type="HAMAP" id="MF_01299">
    <property type="entry name" value="OadC"/>
    <property type="match status" value="1"/>
</dbReference>
<dbReference type="InterPro" id="IPR039556">
    <property type="entry name" value="ICL/PEPM"/>
</dbReference>
<dbReference type="InterPro" id="IPR023687">
    <property type="entry name" value="Oxaloacetate_deCOase_bac"/>
</dbReference>
<dbReference type="InterPro" id="IPR015813">
    <property type="entry name" value="Pyrv/PenolPyrv_kinase-like_dom"/>
</dbReference>
<dbReference type="InterPro" id="IPR040442">
    <property type="entry name" value="Pyrv_kinase-like_dom_sf"/>
</dbReference>
<dbReference type="PANTHER" id="PTHR42905:SF3">
    <property type="entry name" value="OXALOACETATE DECARBOXYLASE"/>
    <property type="match status" value="1"/>
</dbReference>
<dbReference type="PANTHER" id="PTHR42905">
    <property type="entry name" value="PHOSPHOENOLPYRUVATE CARBOXYLASE"/>
    <property type="match status" value="1"/>
</dbReference>
<dbReference type="Pfam" id="PF13714">
    <property type="entry name" value="PEP_mutase"/>
    <property type="match status" value="1"/>
</dbReference>
<dbReference type="SUPFAM" id="SSF51621">
    <property type="entry name" value="Phosphoenolpyruvate/pyruvate domain"/>
    <property type="match status" value="1"/>
</dbReference>
<keyword id="KW-0210">Decarboxylase</keyword>
<keyword id="KW-0456">Lyase</keyword>
<keyword id="KW-0460">Magnesium</keyword>
<keyword id="KW-0479">Metal-binding</keyword>
<accession>Q6N509</accession>
<reference key="1">
    <citation type="journal article" date="2004" name="Nat. Biotechnol.">
        <title>Complete genome sequence of the metabolically versatile photosynthetic bacterium Rhodopseudomonas palustris.</title>
        <authorList>
            <person name="Larimer F.W."/>
            <person name="Chain P."/>
            <person name="Hauser L."/>
            <person name="Lamerdin J.E."/>
            <person name="Malfatti S."/>
            <person name="Do L."/>
            <person name="Land M.L."/>
            <person name="Pelletier D.A."/>
            <person name="Beatty J.T."/>
            <person name="Lang A.S."/>
            <person name="Tabita F.R."/>
            <person name="Gibson J.L."/>
            <person name="Hanson T.E."/>
            <person name="Bobst C."/>
            <person name="Torres y Torres J.L."/>
            <person name="Peres C."/>
            <person name="Harrison F.H."/>
            <person name="Gibson J."/>
            <person name="Harwood C.S."/>
        </authorList>
    </citation>
    <scope>NUCLEOTIDE SEQUENCE [LARGE SCALE GENOMIC DNA]</scope>
    <source>
        <strain>ATCC BAA-98 / CGA009</strain>
    </source>
</reference>